<keyword id="KW-1003">Cell membrane</keyword>
<keyword id="KW-1015">Disulfide bond</keyword>
<keyword id="KW-0325">Glycoprotein</keyword>
<keyword id="KW-0378">Hydrolase</keyword>
<keyword id="KW-0472">Membrane</keyword>
<keyword id="KW-0645">Protease</keyword>
<keyword id="KW-1185">Reference proteome</keyword>
<keyword id="KW-0720">Serine protease</keyword>
<keyword id="KW-0735">Signal-anchor</keyword>
<keyword id="KW-0812">Transmembrane</keyword>
<keyword id="KW-1133">Transmembrane helix</keyword>
<comment type="function">
    <text evidence="2">Serine protease.</text>
</comment>
<comment type="activity regulation">
    <text evidence="2">Inhibited by aprotinin, leupeptin, benzamidine, SERPINA1, SPINT1 and SPINT2.</text>
</comment>
<comment type="subcellular location">
    <subcellularLocation>
        <location evidence="2">Cell membrane</location>
        <topology evidence="7">Single-pass type II membrane protein</topology>
    </subcellularLocation>
</comment>
<comment type="tissue specificity">
    <text evidence="6">Expressed in esophagus, cervix, tongue, and testes.</text>
</comment>
<comment type="similarity">
    <text evidence="5">Belongs to the peptidase S1 family.</text>
</comment>
<name>TM11B_MOUSE</name>
<sequence>MYRPVIASRKSIPPWLIILCVLGVLAALGIIIGLLVHFLAVENKIYYYQGGFKVLDIPYDRNYERETSLESNYLSKILENKMVEAFQNSNIYKQYINSQVITLVPDNNSVTAHIWLVFKDPWSNKENLRRRIESILRQMLENNPESLTTDPGSLKLTEISKVDAEKIINNRCGRRPRMSATYDRITGGSTAHKGEWPWQASLRVNGKHYCGASLIGERFLLTAAHCFQGTNNPKNLTVSFGTRVTPAYMQHSVQEIIIHEDYVKGEHHDDVAVIKLTEKVSFNNDVHRVCLPESTQIFPPGEGVVVTGWGSFSYNGKSPLLLQKASIKIIDTNTCNSEEAYGGRIVDTMLCAGYLEGSIDACQGDSGGPLVHPNSRDIWYLVGIVSWGHECGRVNKPGVYMRVTSYRNWIASKTGI</sequence>
<gene>
    <name type="primary">Tmprss11b</name>
    <name type="synonym">Hatl5</name>
    <name type="synonym">Tmprss11bnl</name>
</gene>
<dbReference type="EC" id="3.4.21.-"/>
<dbReference type="EMBL" id="AK036858">
    <property type="protein sequence ID" value="BAC29606.1"/>
    <property type="molecule type" value="mRNA"/>
</dbReference>
<dbReference type="EMBL" id="AK036968">
    <property type="protein sequence ID" value="BAC29652.1"/>
    <property type="molecule type" value="mRNA"/>
</dbReference>
<dbReference type="EMBL" id="AK137654">
    <property type="protein sequence ID" value="BAE23447.1"/>
    <property type="molecule type" value="mRNA"/>
</dbReference>
<dbReference type="EMBL" id="BC115419">
    <property type="protein sequence ID" value="AAI15420.1"/>
    <property type="molecule type" value="mRNA"/>
</dbReference>
<dbReference type="EMBL" id="BC115420">
    <property type="protein sequence ID" value="AAI15421.1"/>
    <property type="molecule type" value="mRNA"/>
</dbReference>
<dbReference type="CCDS" id="CCDS39126.1"/>
<dbReference type="RefSeq" id="NP_795998.2">
    <property type="nucleotide sequence ID" value="NM_177024.5"/>
</dbReference>
<dbReference type="SMR" id="Q14C59"/>
<dbReference type="BioGRID" id="235589">
    <property type="interactions" value="3"/>
</dbReference>
<dbReference type="FunCoup" id="Q14C59">
    <property type="interactions" value="336"/>
</dbReference>
<dbReference type="STRING" id="10090.ENSMUSP00000042406"/>
<dbReference type="MEROPS" id="S01.207"/>
<dbReference type="GlyCosmos" id="Q14C59">
    <property type="glycosylation" value="2 sites, No reported glycans"/>
</dbReference>
<dbReference type="GlyGen" id="Q14C59">
    <property type="glycosylation" value="3 sites"/>
</dbReference>
<dbReference type="iPTMnet" id="Q14C59"/>
<dbReference type="PhosphoSitePlus" id="Q14C59"/>
<dbReference type="PaxDb" id="10090-ENSMUSP00000042406"/>
<dbReference type="ProteomicsDB" id="259460"/>
<dbReference type="DNASU" id="319875"/>
<dbReference type="Ensembl" id="ENSMUST00000038448.7">
    <property type="protein sequence ID" value="ENSMUSP00000042406.7"/>
    <property type="gene ID" value="ENSMUSG00000035861.7"/>
</dbReference>
<dbReference type="GeneID" id="319875"/>
<dbReference type="KEGG" id="mmu:319875"/>
<dbReference type="UCSC" id="uc008xxu.1">
    <property type="organism name" value="mouse"/>
</dbReference>
<dbReference type="AGR" id="MGI:2442893"/>
<dbReference type="CTD" id="132724"/>
<dbReference type="MGI" id="MGI:2442893">
    <property type="gene designation" value="Tmprss11b"/>
</dbReference>
<dbReference type="VEuPathDB" id="HostDB:ENSMUSG00000035861"/>
<dbReference type="eggNOG" id="KOG3627">
    <property type="taxonomic scope" value="Eukaryota"/>
</dbReference>
<dbReference type="GeneTree" id="ENSGT00940000163621"/>
<dbReference type="HOGENOM" id="CLU_006842_19_0_1"/>
<dbReference type="InParanoid" id="Q14C59"/>
<dbReference type="OMA" id="QIFIHEN"/>
<dbReference type="OrthoDB" id="9425590at2759"/>
<dbReference type="PhylomeDB" id="Q14C59"/>
<dbReference type="TreeFam" id="TF351684"/>
<dbReference type="BioGRID-ORCS" id="319875">
    <property type="hits" value="4 hits in 77 CRISPR screens"/>
</dbReference>
<dbReference type="ChiTaRS" id="Tmprss11b">
    <property type="organism name" value="mouse"/>
</dbReference>
<dbReference type="PRO" id="PR:Q14C59"/>
<dbReference type="Proteomes" id="UP000000589">
    <property type="component" value="Chromosome 5"/>
</dbReference>
<dbReference type="RNAct" id="Q14C59">
    <property type="molecule type" value="protein"/>
</dbReference>
<dbReference type="Bgee" id="ENSMUSG00000035861">
    <property type="expression patterns" value="Expressed in esophagus and 4 other cell types or tissues"/>
</dbReference>
<dbReference type="GO" id="GO:0005576">
    <property type="term" value="C:extracellular region"/>
    <property type="evidence" value="ECO:0007669"/>
    <property type="project" value="InterPro"/>
</dbReference>
<dbReference type="GO" id="GO:0005886">
    <property type="term" value="C:plasma membrane"/>
    <property type="evidence" value="ECO:0000250"/>
    <property type="project" value="UniProtKB"/>
</dbReference>
<dbReference type="GO" id="GO:0004252">
    <property type="term" value="F:serine-type endopeptidase activity"/>
    <property type="evidence" value="ECO:0007669"/>
    <property type="project" value="InterPro"/>
</dbReference>
<dbReference type="GO" id="GO:0008236">
    <property type="term" value="F:serine-type peptidase activity"/>
    <property type="evidence" value="ECO:0000250"/>
    <property type="project" value="UniProtKB"/>
</dbReference>
<dbReference type="GO" id="GO:0006508">
    <property type="term" value="P:proteolysis"/>
    <property type="evidence" value="ECO:0007669"/>
    <property type="project" value="UniProtKB-KW"/>
</dbReference>
<dbReference type="CDD" id="cd00190">
    <property type="entry name" value="Tryp_SPc"/>
    <property type="match status" value="1"/>
</dbReference>
<dbReference type="FunFam" id="2.40.10.10:FF:000003">
    <property type="entry name" value="Transmembrane serine protease 3"/>
    <property type="match status" value="1"/>
</dbReference>
<dbReference type="Gene3D" id="3.30.70.960">
    <property type="entry name" value="SEA domain"/>
    <property type="match status" value="1"/>
</dbReference>
<dbReference type="Gene3D" id="2.40.10.10">
    <property type="entry name" value="Trypsin-like serine proteases"/>
    <property type="match status" value="2"/>
</dbReference>
<dbReference type="InterPro" id="IPR017329">
    <property type="entry name" value="Pept_S1A_HAT/DESC1"/>
</dbReference>
<dbReference type="InterPro" id="IPR009003">
    <property type="entry name" value="Peptidase_S1_PA"/>
</dbReference>
<dbReference type="InterPro" id="IPR043504">
    <property type="entry name" value="Peptidase_S1_PA_chymotrypsin"/>
</dbReference>
<dbReference type="InterPro" id="IPR001314">
    <property type="entry name" value="Peptidase_S1A"/>
</dbReference>
<dbReference type="InterPro" id="IPR000082">
    <property type="entry name" value="SEA_dom"/>
</dbReference>
<dbReference type="InterPro" id="IPR036364">
    <property type="entry name" value="SEA_dom_sf"/>
</dbReference>
<dbReference type="InterPro" id="IPR001254">
    <property type="entry name" value="Trypsin_dom"/>
</dbReference>
<dbReference type="InterPro" id="IPR018114">
    <property type="entry name" value="TRYPSIN_HIS"/>
</dbReference>
<dbReference type="InterPro" id="IPR033116">
    <property type="entry name" value="TRYPSIN_SER"/>
</dbReference>
<dbReference type="PANTHER" id="PTHR24252">
    <property type="entry name" value="ACROSIN-RELATED"/>
    <property type="match status" value="1"/>
</dbReference>
<dbReference type="PANTHER" id="PTHR24252:SF28">
    <property type="entry name" value="TRANSMEMBRANE PROTEASE SERINE 11C ISOFORM X1"/>
    <property type="match status" value="1"/>
</dbReference>
<dbReference type="Pfam" id="PF01390">
    <property type="entry name" value="SEA"/>
    <property type="match status" value="1"/>
</dbReference>
<dbReference type="Pfam" id="PF00089">
    <property type="entry name" value="Trypsin"/>
    <property type="match status" value="1"/>
</dbReference>
<dbReference type="PIRSF" id="PIRSF037941">
    <property type="entry name" value="TMPRSS11ABCDE"/>
    <property type="match status" value="1"/>
</dbReference>
<dbReference type="PRINTS" id="PR00722">
    <property type="entry name" value="CHYMOTRYPSIN"/>
</dbReference>
<dbReference type="SMART" id="SM00020">
    <property type="entry name" value="Tryp_SPc"/>
    <property type="match status" value="1"/>
</dbReference>
<dbReference type="SUPFAM" id="SSF82671">
    <property type="entry name" value="SEA domain"/>
    <property type="match status" value="1"/>
</dbReference>
<dbReference type="SUPFAM" id="SSF50494">
    <property type="entry name" value="Trypsin-like serine proteases"/>
    <property type="match status" value="1"/>
</dbReference>
<dbReference type="PROSITE" id="PS50024">
    <property type="entry name" value="SEA"/>
    <property type="match status" value="1"/>
</dbReference>
<dbReference type="PROSITE" id="PS50240">
    <property type="entry name" value="TRYPSIN_DOM"/>
    <property type="match status" value="1"/>
</dbReference>
<dbReference type="PROSITE" id="PS00134">
    <property type="entry name" value="TRYPSIN_HIS"/>
    <property type="match status" value="1"/>
</dbReference>
<dbReference type="PROSITE" id="PS00135">
    <property type="entry name" value="TRYPSIN_SER"/>
    <property type="match status" value="1"/>
</dbReference>
<evidence type="ECO:0000250" key="1"/>
<evidence type="ECO:0000250" key="2">
    <source>
        <dbReference type="UniProtKB" id="Q86T26"/>
    </source>
</evidence>
<evidence type="ECO:0000255" key="3"/>
<evidence type="ECO:0000255" key="4">
    <source>
        <dbReference type="PROSITE-ProRule" id="PRU00188"/>
    </source>
</evidence>
<evidence type="ECO:0000255" key="5">
    <source>
        <dbReference type="PROSITE-ProRule" id="PRU00274"/>
    </source>
</evidence>
<evidence type="ECO:0000269" key="6">
    <source>
    </source>
</evidence>
<evidence type="ECO:0000305" key="7"/>
<accession>Q14C59</accession>
<accession>Q8BZ13</accession>
<accession>Q8BZ30</accession>
<reference key="1">
    <citation type="journal article" date="2005" name="Science">
        <title>The transcriptional landscape of the mammalian genome.</title>
        <authorList>
            <person name="Carninci P."/>
            <person name="Kasukawa T."/>
            <person name="Katayama S."/>
            <person name="Gough J."/>
            <person name="Frith M.C."/>
            <person name="Maeda N."/>
            <person name="Oyama R."/>
            <person name="Ravasi T."/>
            <person name="Lenhard B."/>
            <person name="Wells C."/>
            <person name="Kodzius R."/>
            <person name="Shimokawa K."/>
            <person name="Bajic V.B."/>
            <person name="Brenner S.E."/>
            <person name="Batalov S."/>
            <person name="Forrest A.R."/>
            <person name="Zavolan M."/>
            <person name="Davis M.J."/>
            <person name="Wilming L.G."/>
            <person name="Aidinis V."/>
            <person name="Allen J.E."/>
            <person name="Ambesi-Impiombato A."/>
            <person name="Apweiler R."/>
            <person name="Aturaliya R.N."/>
            <person name="Bailey T.L."/>
            <person name="Bansal M."/>
            <person name="Baxter L."/>
            <person name="Beisel K.W."/>
            <person name="Bersano T."/>
            <person name="Bono H."/>
            <person name="Chalk A.M."/>
            <person name="Chiu K.P."/>
            <person name="Choudhary V."/>
            <person name="Christoffels A."/>
            <person name="Clutterbuck D.R."/>
            <person name="Crowe M.L."/>
            <person name="Dalla E."/>
            <person name="Dalrymple B.P."/>
            <person name="de Bono B."/>
            <person name="Della Gatta G."/>
            <person name="di Bernardo D."/>
            <person name="Down T."/>
            <person name="Engstrom P."/>
            <person name="Fagiolini M."/>
            <person name="Faulkner G."/>
            <person name="Fletcher C.F."/>
            <person name="Fukushima T."/>
            <person name="Furuno M."/>
            <person name="Futaki S."/>
            <person name="Gariboldi M."/>
            <person name="Georgii-Hemming P."/>
            <person name="Gingeras T.R."/>
            <person name="Gojobori T."/>
            <person name="Green R.E."/>
            <person name="Gustincich S."/>
            <person name="Harbers M."/>
            <person name="Hayashi Y."/>
            <person name="Hensch T.K."/>
            <person name="Hirokawa N."/>
            <person name="Hill D."/>
            <person name="Huminiecki L."/>
            <person name="Iacono M."/>
            <person name="Ikeo K."/>
            <person name="Iwama A."/>
            <person name="Ishikawa T."/>
            <person name="Jakt M."/>
            <person name="Kanapin A."/>
            <person name="Katoh M."/>
            <person name="Kawasawa Y."/>
            <person name="Kelso J."/>
            <person name="Kitamura H."/>
            <person name="Kitano H."/>
            <person name="Kollias G."/>
            <person name="Krishnan S.P."/>
            <person name="Kruger A."/>
            <person name="Kummerfeld S.K."/>
            <person name="Kurochkin I.V."/>
            <person name="Lareau L.F."/>
            <person name="Lazarevic D."/>
            <person name="Lipovich L."/>
            <person name="Liu J."/>
            <person name="Liuni S."/>
            <person name="McWilliam S."/>
            <person name="Madan Babu M."/>
            <person name="Madera M."/>
            <person name="Marchionni L."/>
            <person name="Matsuda H."/>
            <person name="Matsuzawa S."/>
            <person name="Miki H."/>
            <person name="Mignone F."/>
            <person name="Miyake S."/>
            <person name="Morris K."/>
            <person name="Mottagui-Tabar S."/>
            <person name="Mulder N."/>
            <person name="Nakano N."/>
            <person name="Nakauchi H."/>
            <person name="Ng P."/>
            <person name="Nilsson R."/>
            <person name="Nishiguchi S."/>
            <person name="Nishikawa S."/>
            <person name="Nori F."/>
            <person name="Ohara O."/>
            <person name="Okazaki Y."/>
            <person name="Orlando V."/>
            <person name="Pang K.C."/>
            <person name="Pavan W.J."/>
            <person name="Pavesi G."/>
            <person name="Pesole G."/>
            <person name="Petrovsky N."/>
            <person name="Piazza S."/>
            <person name="Reed J."/>
            <person name="Reid J.F."/>
            <person name="Ring B.Z."/>
            <person name="Ringwald M."/>
            <person name="Rost B."/>
            <person name="Ruan Y."/>
            <person name="Salzberg S.L."/>
            <person name="Sandelin A."/>
            <person name="Schneider C."/>
            <person name="Schoenbach C."/>
            <person name="Sekiguchi K."/>
            <person name="Semple C.A."/>
            <person name="Seno S."/>
            <person name="Sessa L."/>
            <person name="Sheng Y."/>
            <person name="Shibata Y."/>
            <person name="Shimada H."/>
            <person name="Shimada K."/>
            <person name="Silva D."/>
            <person name="Sinclair B."/>
            <person name="Sperling S."/>
            <person name="Stupka E."/>
            <person name="Sugiura K."/>
            <person name="Sultana R."/>
            <person name="Takenaka Y."/>
            <person name="Taki K."/>
            <person name="Tammoja K."/>
            <person name="Tan S.L."/>
            <person name="Tang S."/>
            <person name="Taylor M.S."/>
            <person name="Tegner J."/>
            <person name="Teichmann S.A."/>
            <person name="Ueda H.R."/>
            <person name="van Nimwegen E."/>
            <person name="Verardo R."/>
            <person name="Wei C.L."/>
            <person name="Yagi K."/>
            <person name="Yamanishi H."/>
            <person name="Zabarovsky E."/>
            <person name="Zhu S."/>
            <person name="Zimmer A."/>
            <person name="Hide W."/>
            <person name="Bult C."/>
            <person name="Grimmond S.M."/>
            <person name="Teasdale R.D."/>
            <person name="Liu E.T."/>
            <person name="Brusic V."/>
            <person name="Quackenbush J."/>
            <person name="Wahlestedt C."/>
            <person name="Mattick J.S."/>
            <person name="Hume D.A."/>
            <person name="Kai C."/>
            <person name="Sasaki D."/>
            <person name="Tomaru Y."/>
            <person name="Fukuda S."/>
            <person name="Kanamori-Katayama M."/>
            <person name="Suzuki M."/>
            <person name="Aoki J."/>
            <person name="Arakawa T."/>
            <person name="Iida J."/>
            <person name="Imamura K."/>
            <person name="Itoh M."/>
            <person name="Kato T."/>
            <person name="Kawaji H."/>
            <person name="Kawagashira N."/>
            <person name="Kawashima T."/>
            <person name="Kojima M."/>
            <person name="Kondo S."/>
            <person name="Konno H."/>
            <person name="Nakano K."/>
            <person name="Ninomiya N."/>
            <person name="Nishio T."/>
            <person name="Okada M."/>
            <person name="Plessy C."/>
            <person name="Shibata K."/>
            <person name="Shiraki T."/>
            <person name="Suzuki S."/>
            <person name="Tagami M."/>
            <person name="Waki K."/>
            <person name="Watahiki A."/>
            <person name="Okamura-Oho Y."/>
            <person name="Suzuki H."/>
            <person name="Kawai J."/>
            <person name="Hayashizaki Y."/>
        </authorList>
    </citation>
    <scope>NUCLEOTIDE SEQUENCE [LARGE SCALE MRNA]</scope>
    <source>
        <strain>C57BL/6J</strain>
        <tissue>Vagina</tissue>
    </source>
</reference>
<reference key="2">
    <citation type="journal article" date="2004" name="Genome Res.">
        <title>The status, quality, and expansion of the NIH full-length cDNA project: the Mammalian Gene Collection (MGC).</title>
        <authorList>
            <consortium name="The MGC Project Team"/>
        </authorList>
    </citation>
    <scope>NUCLEOTIDE SEQUENCE [LARGE SCALE MRNA]</scope>
</reference>
<reference key="3">
    <citation type="journal article" date="2004" name="J. Biol. Chem.">
        <title>Mouse DESC1 is located within a cluster of seven DESC1-like genes and encodes a type II transmembrane serine protease that forms serpin inhibitory complexes.</title>
        <authorList>
            <person name="Hobson J.P."/>
            <person name="Netzel-Arnett S."/>
            <person name="Szabo R."/>
            <person name="Rehault S.M."/>
            <person name="Church F.C."/>
            <person name="Strickland D.K."/>
            <person name="Lawrence D.A."/>
            <person name="Antalis T.M."/>
            <person name="Bugge T.H."/>
        </authorList>
    </citation>
    <scope>IDENTIFICATION</scope>
</reference>
<reference key="4">
    <citation type="journal article" date="2014" name="PLoS ONE">
        <title>HATL5: a cell surface serine protease differentially expressed in epithelial cancers.</title>
        <authorList>
            <person name="Miller G.S."/>
            <person name="Zoratti G.L."/>
            <person name="Murray A.S."/>
            <person name="Bergum C."/>
            <person name="Tanabe L.M."/>
            <person name="List K."/>
        </authorList>
    </citation>
    <scope>TISSUE SPECIFICITY</scope>
</reference>
<organism>
    <name type="scientific">Mus musculus</name>
    <name type="common">Mouse</name>
    <dbReference type="NCBI Taxonomy" id="10090"/>
    <lineage>
        <taxon>Eukaryota</taxon>
        <taxon>Metazoa</taxon>
        <taxon>Chordata</taxon>
        <taxon>Craniata</taxon>
        <taxon>Vertebrata</taxon>
        <taxon>Euteleostomi</taxon>
        <taxon>Mammalia</taxon>
        <taxon>Eutheria</taxon>
        <taxon>Euarchontoglires</taxon>
        <taxon>Glires</taxon>
        <taxon>Rodentia</taxon>
        <taxon>Myomorpha</taxon>
        <taxon>Muroidea</taxon>
        <taxon>Muridae</taxon>
        <taxon>Murinae</taxon>
        <taxon>Mus</taxon>
        <taxon>Mus</taxon>
    </lineage>
</organism>
<protein>
    <recommendedName>
        <fullName>Transmembrane protease serine 11B-like protein</fullName>
        <ecNumber>3.4.21.-</ecNumber>
    </recommendedName>
    <alternativeName>
        <fullName>Airway trypsin-like protease 5</fullName>
    </alternativeName>
    <alternativeName>
        <fullName>Transmembrane protease serine 11B</fullName>
    </alternativeName>
</protein>
<proteinExistence type="evidence at transcript level"/>
<feature type="chain" id="PRO_0000299320" description="Transmembrane protease serine 11B-like protein">
    <location>
        <begin position="1"/>
        <end position="416"/>
    </location>
</feature>
<feature type="topological domain" description="Cytoplasmic" evidence="3">
    <location>
        <begin position="1"/>
        <end position="15"/>
    </location>
</feature>
<feature type="transmembrane region" description="Helical; Signal-anchor for type II membrane protein" evidence="3">
    <location>
        <begin position="16"/>
        <end position="36"/>
    </location>
</feature>
<feature type="topological domain" description="Extracellular" evidence="3">
    <location>
        <begin position="37"/>
        <end position="416"/>
    </location>
</feature>
<feature type="domain" description="SEA" evidence="4">
    <location>
        <begin position="44"/>
        <end position="161"/>
    </location>
</feature>
<feature type="domain" description="Peptidase S1" evidence="5">
    <location>
        <begin position="185"/>
        <end position="415"/>
    </location>
</feature>
<feature type="active site" description="Charge relay system" evidence="1">
    <location>
        <position position="225"/>
    </location>
</feature>
<feature type="active site" description="Charge relay system" evidence="1">
    <location>
        <position position="270"/>
    </location>
</feature>
<feature type="active site" description="Charge relay system" evidence="1">
    <location>
        <position position="366"/>
    </location>
</feature>
<feature type="glycosylation site" description="N-linked (GlcNAc...) asparagine" evidence="3">
    <location>
        <position position="107"/>
    </location>
</feature>
<feature type="glycosylation site" description="N-linked (GlcNAc...) asparagine" evidence="3">
    <location>
        <position position="235"/>
    </location>
</feature>
<feature type="disulfide bond" evidence="5">
    <location>
        <begin position="210"/>
        <end position="226"/>
    </location>
</feature>
<feature type="disulfide bond" evidence="5">
    <location>
        <begin position="335"/>
        <end position="351"/>
    </location>
</feature>
<feature type="disulfide bond" evidence="5">
    <location>
        <begin position="362"/>
        <end position="391"/>
    </location>
</feature>
<feature type="sequence conflict" description="In Ref. 2; AAI15420." evidence="7" ref="2">
    <original>D</original>
    <variation>N</variation>
    <location>
        <position position="56"/>
    </location>
</feature>
<feature type="sequence conflict" description="In Ref. 1; BAC29606." evidence="7" ref="1">
    <original>S</original>
    <variation>Y</variation>
    <location>
        <position position="98"/>
    </location>
</feature>